<evidence type="ECO:0000255" key="1">
    <source>
        <dbReference type="HAMAP-Rule" id="MF_01077"/>
    </source>
</evidence>
<feature type="chain" id="PRO_1000064751" description="Ribosome maturation factor RimP">
    <location>
        <begin position="1"/>
        <end position="153"/>
    </location>
</feature>
<name>RIMP_PSYIN</name>
<proteinExistence type="inferred from homology"/>
<reference key="1">
    <citation type="journal article" date="2008" name="BMC Genomics">
        <title>Genomics of an extreme psychrophile, Psychromonas ingrahamii.</title>
        <authorList>
            <person name="Riley M."/>
            <person name="Staley J.T."/>
            <person name="Danchin A."/>
            <person name="Wang T.Z."/>
            <person name="Brettin T.S."/>
            <person name="Hauser L.J."/>
            <person name="Land M.L."/>
            <person name="Thompson L.S."/>
        </authorList>
    </citation>
    <scope>NUCLEOTIDE SEQUENCE [LARGE SCALE GENOMIC DNA]</scope>
    <source>
        <strain>DSM 17664 / CCUG 51855 / 37</strain>
    </source>
</reference>
<gene>
    <name evidence="1" type="primary">rimP</name>
    <name type="ordered locus">Ping_0815</name>
</gene>
<protein>
    <recommendedName>
        <fullName evidence="1">Ribosome maturation factor RimP</fullName>
    </recommendedName>
</protein>
<keyword id="KW-0963">Cytoplasm</keyword>
<keyword id="KW-1185">Reference proteome</keyword>
<keyword id="KW-0690">Ribosome biogenesis</keyword>
<dbReference type="EMBL" id="CP000510">
    <property type="protein sequence ID" value="ABM02658.1"/>
    <property type="molecule type" value="Genomic_DNA"/>
</dbReference>
<dbReference type="RefSeq" id="WP_011769221.1">
    <property type="nucleotide sequence ID" value="NC_008709.1"/>
</dbReference>
<dbReference type="SMR" id="A1ST43"/>
<dbReference type="STRING" id="357804.Ping_0815"/>
<dbReference type="KEGG" id="pin:Ping_0815"/>
<dbReference type="eggNOG" id="COG0779">
    <property type="taxonomic scope" value="Bacteria"/>
</dbReference>
<dbReference type="HOGENOM" id="CLU_070525_1_1_6"/>
<dbReference type="OrthoDB" id="9805006at2"/>
<dbReference type="Proteomes" id="UP000000639">
    <property type="component" value="Chromosome"/>
</dbReference>
<dbReference type="GO" id="GO:0005829">
    <property type="term" value="C:cytosol"/>
    <property type="evidence" value="ECO:0007669"/>
    <property type="project" value="TreeGrafter"/>
</dbReference>
<dbReference type="GO" id="GO:0000028">
    <property type="term" value="P:ribosomal small subunit assembly"/>
    <property type="evidence" value="ECO:0007669"/>
    <property type="project" value="TreeGrafter"/>
</dbReference>
<dbReference type="GO" id="GO:0006412">
    <property type="term" value="P:translation"/>
    <property type="evidence" value="ECO:0007669"/>
    <property type="project" value="TreeGrafter"/>
</dbReference>
<dbReference type="CDD" id="cd01734">
    <property type="entry name" value="YlxS_C"/>
    <property type="match status" value="1"/>
</dbReference>
<dbReference type="FunFam" id="3.30.300.70:FF:000001">
    <property type="entry name" value="Ribosome maturation factor RimP"/>
    <property type="match status" value="1"/>
</dbReference>
<dbReference type="Gene3D" id="2.30.30.180">
    <property type="entry name" value="Ribosome maturation factor RimP, C-terminal domain"/>
    <property type="match status" value="1"/>
</dbReference>
<dbReference type="Gene3D" id="3.30.300.70">
    <property type="entry name" value="RimP-like superfamily, N-terminal"/>
    <property type="match status" value="1"/>
</dbReference>
<dbReference type="HAMAP" id="MF_01077">
    <property type="entry name" value="RimP"/>
    <property type="match status" value="1"/>
</dbReference>
<dbReference type="InterPro" id="IPR003728">
    <property type="entry name" value="Ribosome_maturation_RimP"/>
</dbReference>
<dbReference type="InterPro" id="IPR028998">
    <property type="entry name" value="RimP_C"/>
</dbReference>
<dbReference type="InterPro" id="IPR036847">
    <property type="entry name" value="RimP_C_sf"/>
</dbReference>
<dbReference type="InterPro" id="IPR028989">
    <property type="entry name" value="RimP_N"/>
</dbReference>
<dbReference type="InterPro" id="IPR035956">
    <property type="entry name" value="RimP_N_sf"/>
</dbReference>
<dbReference type="NCBIfam" id="NF000927">
    <property type="entry name" value="PRK00092.1-1"/>
    <property type="match status" value="1"/>
</dbReference>
<dbReference type="PANTHER" id="PTHR33867">
    <property type="entry name" value="RIBOSOME MATURATION FACTOR RIMP"/>
    <property type="match status" value="1"/>
</dbReference>
<dbReference type="PANTHER" id="PTHR33867:SF1">
    <property type="entry name" value="RIBOSOME MATURATION FACTOR RIMP"/>
    <property type="match status" value="1"/>
</dbReference>
<dbReference type="Pfam" id="PF17384">
    <property type="entry name" value="DUF150_C"/>
    <property type="match status" value="1"/>
</dbReference>
<dbReference type="Pfam" id="PF02576">
    <property type="entry name" value="RimP_N"/>
    <property type="match status" value="1"/>
</dbReference>
<dbReference type="SUPFAM" id="SSF74942">
    <property type="entry name" value="YhbC-like, C-terminal domain"/>
    <property type="match status" value="1"/>
</dbReference>
<dbReference type="SUPFAM" id="SSF75420">
    <property type="entry name" value="YhbC-like, N-terminal domain"/>
    <property type="match status" value="1"/>
</dbReference>
<organism>
    <name type="scientific">Psychromonas ingrahamii (strain DSM 17664 / CCUG 51855 / 37)</name>
    <dbReference type="NCBI Taxonomy" id="357804"/>
    <lineage>
        <taxon>Bacteria</taxon>
        <taxon>Pseudomonadati</taxon>
        <taxon>Pseudomonadota</taxon>
        <taxon>Gammaproteobacteria</taxon>
        <taxon>Alteromonadales</taxon>
        <taxon>Psychromonadaceae</taxon>
        <taxon>Psychromonas</taxon>
    </lineage>
</organism>
<comment type="function">
    <text evidence="1">Required for maturation of 30S ribosomal subunits.</text>
</comment>
<comment type="subcellular location">
    <subcellularLocation>
        <location evidence="1">Cytoplasm</location>
    </subcellularLocation>
</comment>
<comment type="similarity">
    <text evidence="1">Belongs to the RimP family.</text>
</comment>
<sequence length="153" mass="17402">MASLEERLTEMLAPSVEDLGYELVGVEYIRAGKHSTLRVYIDQDEGILVDDCAAVSRQVSAIMDVEDPITNEYSLEVSSPGMNRPLFKAEHYQIFAGEEVKIQLRMPIQNRRRWKGVIVSAEDEIICLNIEGREERFSLSNIQKANIVPKFDN</sequence>
<accession>A1ST43</accession>